<dbReference type="EMBL" id="AL359839">
    <property type="status" value="NOT_ANNOTATED_CDS"/>
    <property type="molecule type" value="Genomic_DNA"/>
</dbReference>
<dbReference type="CCDS" id="CCDS85967.1"/>
<dbReference type="RefSeq" id="NP_001345367.1">
    <property type="nucleotide sequence ID" value="NM_001358438.1"/>
</dbReference>
<dbReference type="SMR" id="A0A0U1RQI7"/>
<dbReference type="FunCoup" id="A0A0U1RQI7">
    <property type="interactions" value="1"/>
</dbReference>
<dbReference type="STRING" id="9606.ENSP00000489024"/>
<dbReference type="BioMuta" id="KLF18"/>
<dbReference type="MassIVE" id="A0A0U1RQI7"/>
<dbReference type="Antibodypedia" id="81872">
    <property type="antibodies" value="1 antibodies from 1 providers"/>
</dbReference>
<dbReference type="Ensembl" id="ENST00000634670.1">
    <property type="protein sequence ID" value="ENSP00000489024.1"/>
    <property type="gene ID" value="ENSG00000283039.1"/>
</dbReference>
<dbReference type="GeneID" id="105378952"/>
<dbReference type="MANE-Select" id="ENST00000634670.1">
    <property type="protein sequence ID" value="ENSP00000489024.1"/>
    <property type="RefSeq nucleotide sequence ID" value="NM_001358438.1"/>
    <property type="RefSeq protein sequence ID" value="NP_001345367.1"/>
</dbReference>
<dbReference type="AGR" id="HGNC:51793"/>
<dbReference type="GeneCards" id="KLF18"/>
<dbReference type="HGNC" id="HGNC:51793">
    <property type="gene designation" value="KLF18"/>
</dbReference>
<dbReference type="HPA" id="ENSG00000283039">
    <property type="expression patterns" value="Not detected"/>
</dbReference>
<dbReference type="MIM" id="621009">
    <property type="type" value="gene"/>
</dbReference>
<dbReference type="neXtProt" id="NX_A0A0U1RQI7"/>
<dbReference type="VEuPathDB" id="HostDB:ENSG00000283039"/>
<dbReference type="GeneTree" id="ENSGT00940000164376"/>
<dbReference type="InParanoid" id="A0A0U1RQI7"/>
<dbReference type="OMA" id="TLCGEQM"/>
<dbReference type="OrthoDB" id="8117402at2759"/>
<dbReference type="PAN-GO" id="A0A0U1RQI7">
    <property type="GO annotations" value="3 GO annotations based on evolutionary models"/>
</dbReference>
<dbReference type="Pharos" id="A0A0U1RQI7">
    <property type="development level" value="Tdark"/>
</dbReference>
<dbReference type="PRO" id="PR:A0A0U1RQI7"/>
<dbReference type="Proteomes" id="UP000005640">
    <property type="component" value="Chromosome 1"/>
</dbReference>
<dbReference type="RNAct" id="A0A0U1RQI7">
    <property type="molecule type" value="protein"/>
</dbReference>
<dbReference type="Bgee" id="ENSG00000283039">
    <property type="expression patterns" value="Expressed in male germ line stem cell (sensu Vertebrata) in testis and 1 other cell type or tissue"/>
</dbReference>
<dbReference type="GO" id="GO:0005634">
    <property type="term" value="C:nucleus"/>
    <property type="evidence" value="ECO:0007669"/>
    <property type="project" value="UniProtKB-SubCell"/>
</dbReference>
<dbReference type="GO" id="GO:0000981">
    <property type="term" value="F:DNA-binding transcription factor activity, RNA polymerase II-specific"/>
    <property type="evidence" value="ECO:0000318"/>
    <property type="project" value="GO_Central"/>
</dbReference>
<dbReference type="GO" id="GO:0000978">
    <property type="term" value="F:RNA polymerase II cis-regulatory region sequence-specific DNA binding"/>
    <property type="evidence" value="ECO:0000318"/>
    <property type="project" value="GO_Central"/>
</dbReference>
<dbReference type="GO" id="GO:0008270">
    <property type="term" value="F:zinc ion binding"/>
    <property type="evidence" value="ECO:0007669"/>
    <property type="project" value="UniProtKB-KW"/>
</dbReference>
<dbReference type="GO" id="GO:0006357">
    <property type="term" value="P:regulation of transcription by RNA polymerase II"/>
    <property type="evidence" value="ECO:0000318"/>
    <property type="project" value="GO_Central"/>
</dbReference>
<dbReference type="CDD" id="cd21575">
    <property type="entry name" value="KLF18_N"/>
    <property type="match status" value="3"/>
</dbReference>
<dbReference type="FunFam" id="3.30.160.60:FF:000018">
    <property type="entry name" value="Krueppel-like factor 15"/>
    <property type="match status" value="1"/>
</dbReference>
<dbReference type="FunFam" id="3.30.160.60:FF:002617">
    <property type="entry name" value="Kruppel like factor 18"/>
    <property type="match status" value="1"/>
</dbReference>
<dbReference type="FunFam" id="3.30.160.60:FF:000624">
    <property type="entry name" value="zinc finger protein 697"/>
    <property type="match status" value="1"/>
</dbReference>
<dbReference type="Gene3D" id="3.30.160.60">
    <property type="entry name" value="Classic Zinc Finger"/>
    <property type="match status" value="3"/>
</dbReference>
<dbReference type="Gene3D" id="2.150.10.10">
    <property type="entry name" value="Serralysin-like metalloprotease, C-terminal"/>
    <property type="match status" value="2"/>
</dbReference>
<dbReference type="InterPro" id="IPR011049">
    <property type="entry name" value="Serralysin-like_metalloprot_C"/>
</dbReference>
<dbReference type="InterPro" id="IPR036236">
    <property type="entry name" value="Znf_C2H2_sf"/>
</dbReference>
<dbReference type="InterPro" id="IPR013087">
    <property type="entry name" value="Znf_C2H2_type"/>
</dbReference>
<dbReference type="PANTHER" id="PTHR23235">
    <property type="entry name" value="KRUEPPEL-LIKE TRANSCRIPTION FACTOR"/>
    <property type="match status" value="1"/>
</dbReference>
<dbReference type="PANTHER" id="PTHR23235:SF156">
    <property type="entry name" value="KRUPPEL-LIKE FACTOR 18"/>
    <property type="match status" value="1"/>
</dbReference>
<dbReference type="Pfam" id="PF00096">
    <property type="entry name" value="zf-C2H2"/>
    <property type="match status" value="2"/>
</dbReference>
<dbReference type="SMART" id="SM00355">
    <property type="entry name" value="ZnF_C2H2"/>
    <property type="match status" value="3"/>
</dbReference>
<dbReference type="SUPFAM" id="SSF57667">
    <property type="entry name" value="beta-beta-alpha zinc fingers"/>
    <property type="match status" value="2"/>
</dbReference>
<dbReference type="PROSITE" id="PS00028">
    <property type="entry name" value="ZINC_FINGER_C2H2_1"/>
    <property type="match status" value="3"/>
</dbReference>
<dbReference type="PROSITE" id="PS50157">
    <property type="entry name" value="ZINC_FINGER_C2H2_2"/>
    <property type="match status" value="3"/>
</dbReference>
<proteinExistence type="inferred from homology"/>
<feature type="chain" id="PRO_0000444870" description="Kruppel-like factor 18">
    <location>
        <begin position="1"/>
        <end position="1052"/>
    </location>
</feature>
<feature type="zinc finger region" description="C2H2-type 1" evidence="1">
    <location>
        <begin position="964"/>
        <end position="988"/>
    </location>
</feature>
<feature type="zinc finger region" description="C2H2-type 2" evidence="1">
    <location>
        <begin position="994"/>
        <end position="1018"/>
    </location>
</feature>
<feature type="zinc finger region" description="C2H2-type 3" evidence="1">
    <location>
        <begin position="1024"/>
        <end position="1046"/>
    </location>
</feature>
<accession>A0A0U1RQI7</accession>
<keyword id="KW-0479">Metal-binding</keyword>
<keyword id="KW-0539">Nucleus</keyword>
<keyword id="KW-1185">Reference proteome</keyword>
<keyword id="KW-0677">Repeat</keyword>
<keyword id="KW-0862">Zinc</keyword>
<keyword id="KW-0863">Zinc-finger</keyword>
<sequence>MDSSLLQAIEEIEKFFQHLSERHTEQAETPDAPEPQNCMPLTAHAEESQHESTQSKTMPPLGSTMMTSACTNIPGTVLTQDLTMHPLKALEDLSETYSMGQKVTSFDQVKHTAGSQMTDVTVTPKSSPTDCQKTTITASNMTISNESSQLNTPSSDQTLNESQIPALLGDQMKTLSDNQTLCGDQVTFSSDQTLTDGHTVTSGSDETLSGGQMTTSLDLYGGQMMTSIDNQTLCGEQMTTSSGNQAFYGRQMTTSTGNQTLCGEQMTTSTGNQALYGGQMTTSASNQTLCGEQMTTSTSNQTLCGEQVMTSTGNQALCGGQMTTSTGNQNLYGGQMMTSTGNQTLYWGQMMTSTGNQNLCGEQVMTSTGNQALCGGQMTTSTGNQNLYGGQMMTSTGNQTLYWGQMMTSTGNQNLCGEQVMTSTGNQALCGGQMTTSTGNQNLCGEQVMTSTSNQTLCGEQTTTSTSNQTLCGEQVTTSTGNQALYGGQMMTSTGNQTLYWGQMMTSTGNQNLCGEQMTTSTGNQALYGGQMTTSTSNQTLCGEQMTTPTSNQTLCGEQVTTSTGNQALYGGQITTSTSNQTLCGEQMTTSTSNQTLCGEQVTTSTGNQALYGGQMMTSTGNQALYGGQMTTSASNQTLCGEQMTTSTSNQTLCEEQVMTSTGNQALCGEQMTTSTGNQALYGGQMTTSTSNQTLCGEQTTTSTSNQTLCGEQVTTSTGNQALYGGQMMTSTGNQTLYWGQMMTSTGNQNLCGEQMTTSTGNQALYGGQMTTSTSNQTLCGEQMTTPTSNQTLCGEQVTTSTGNQALYRGQITTSTSNQTLCGEQMTTSTSNQTLCGEQVTTSTGNQALYGGQMMTSTGNQNLYGGQNMTSTDNQALYGGQMATYSGNQTLYGDQMLTLQVGNMTTLTDDHSLYGGYMMSHQFSSLPYPGFLCFSSSHLIQGQLPKQKTQSCQFWKNPEVSRPYVCTYEDCKMSYSKACHLRTHMRKHTGEKPYVCDVEGCTWKFARSDELNRHKKRHTGERPYLCSICSKNFARSDHLKQHAKVHNIRPGL</sequence>
<evidence type="ECO:0000255" key="1">
    <source>
        <dbReference type="PROSITE-ProRule" id="PRU00042"/>
    </source>
</evidence>
<evidence type="ECO:0000305" key="2"/>
<evidence type="ECO:0000312" key="3">
    <source>
        <dbReference type="HGNC" id="HGNC:51793"/>
    </source>
</evidence>
<gene>
    <name evidence="3" type="primary">KLF18</name>
</gene>
<comment type="subcellular location">
    <subcellularLocation>
        <location evidence="2">Nucleus</location>
    </subcellularLocation>
</comment>
<comment type="similarity">
    <text evidence="2">Belongs to the krueppel C2H2-type zinc-finger protein family.</text>
</comment>
<organism>
    <name type="scientific">Homo sapiens</name>
    <name type="common">Human</name>
    <dbReference type="NCBI Taxonomy" id="9606"/>
    <lineage>
        <taxon>Eukaryota</taxon>
        <taxon>Metazoa</taxon>
        <taxon>Chordata</taxon>
        <taxon>Craniata</taxon>
        <taxon>Vertebrata</taxon>
        <taxon>Euteleostomi</taxon>
        <taxon>Mammalia</taxon>
        <taxon>Eutheria</taxon>
        <taxon>Euarchontoglires</taxon>
        <taxon>Primates</taxon>
        <taxon>Haplorrhini</taxon>
        <taxon>Catarrhini</taxon>
        <taxon>Hominidae</taxon>
        <taxon>Homo</taxon>
    </lineage>
</organism>
<name>KLF18_HUMAN</name>
<reference key="1">
    <citation type="journal article" date="2006" name="Nature">
        <title>The DNA sequence and biological annotation of human chromosome 1.</title>
        <authorList>
            <person name="Gregory S.G."/>
            <person name="Barlow K.F."/>
            <person name="McLay K.E."/>
            <person name="Kaul R."/>
            <person name="Swarbreck D."/>
            <person name="Dunham A."/>
            <person name="Scott C.E."/>
            <person name="Howe K.L."/>
            <person name="Woodfine K."/>
            <person name="Spencer C.C.A."/>
            <person name="Jones M.C."/>
            <person name="Gillson C."/>
            <person name="Searle S."/>
            <person name="Zhou Y."/>
            <person name="Kokocinski F."/>
            <person name="McDonald L."/>
            <person name="Evans R."/>
            <person name="Phillips K."/>
            <person name="Atkinson A."/>
            <person name="Cooper R."/>
            <person name="Jones C."/>
            <person name="Hall R.E."/>
            <person name="Andrews T.D."/>
            <person name="Lloyd C."/>
            <person name="Ainscough R."/>
            <person name="Almeida J.P."/>
            <person name="Ambrose K.D."/>
            <person name="Anderson F."/>
            <person name="Andrew R.W."/>
            <person name="Ashwell R.I.S."/>
            <person name="Aubin K."/>
            <person name="Babbage A.K."/>
            <person name="Bagguley C.L."/>
            <person name="Bailey J."/>
            <person name="Beasley H."/>
            <person name="Bethel G."/>
            <person name="Bird C.P."/>
            <person name="Bray-Allen S."/>
            <person name="Brown J.Y."/>
            <person name="Brown A.J."/>
            <person name="Buckley D."/>
            <person name="Burton J."/>
            <person name="Bye J."/>
            <person name="Carder C."/>
            <person name="Chapman J.C."/>
            <person name="Clark S.Y."/>
            <person name="Clarke G."/>
            <person name="Clee C."/>
            <person name="Cobley V."/>
            <person name="Collier R.E."/>
            <person name="Corby N."/>
            <person name="Coville G.J."/>
            <person name="Davies J."/>
            <person name="Deadman R."/>
            <person name="Dunn M."/>
            <person name="Earthrowl M."/>
            <person name="Ellington A.G."/>
            <person name="Errington H."/>
            <person name="Frankish A."/>
            <person name="Frankland J."/>
            <person name="French L."/>
            <person name="Garner P."/>
            <person name="Garnett J."/>
            <person name="Gay L."/>
            <person name="Ghori M.R.J."/>
            <person name="Gibson R."/>
            <person name="Gilby L.M."/>
            <person name="Gillett W."/>
            <person name="Glithero R.J."/>
            <person name="Grafham D.V."/>
            <person name="Griffiths C."/>
            <person name="Griffiths-Jones S."/>
            <person name="Grocock R."/>
            <person name="Hammond S."/>
            <person name="Harrison E.S.I."/>
            <person name="Hart E."/>
            <person name="Haugen E."/>
            <person name="Heath P.D."/>
            <person name="Holmes S."/>
            <person name="Holt K."/>
            <person name="Howden P.J."/>
            <person name="Hunt A.R."/>
            <person name="Hunt S.E."/>
            <person name="Hunter G."/>
            <person name="Isherwood J."/>
            <person name="James R."/>
            <person name="Johnson C."/>
            <person name="Johnson D."/>
            <person name="Joy A."/>
            <person name="Kay M."/>
            <person name="Kershaw J.K."/>
            <person name="Kibukawa M."/>
            <person name="Kimberley A.M."/>
            <person name="King A."/>
            <person name="Knights A.J."/>
            <person name="Lad H."/>
            <person name="Laird G."/>
            <person name="Lawlor S."/>
            <person name="Leongamornlert D.A."/>
            <person name="Lloyd D.M."/>
            <person name="Loveland J."/>
            <person name="Lovell J."/>
            <person name="Lush M.J."/>
            <person name="Lyne R."/>
            <person name="Martin S."/>
            <person name="Mashreghi-Mohammadi M."/>
            <person name="Matthews L."/>
            <person name="Matthews N.S.W."/>
            <person name="McLaren S."/>
            <person name="Milne S."/>
            <person name="Mistry S."/>
            <person name="Moore M.J.F."/>
            <person name="Nickerson T."/>
            <person name="O'Dell C.N."/>
            <person name="Oliver K."/>
            <person name="Palmeiri A."/>
            <person name="Palmer S.A."/>
            <person name="Parker A."/>
            <person name="Patel D."/>
            <person name="Pearce A.V."/>
            <person name="Peck A.I."/>
            <person name="Pelan S."/>
            <person name="Phelps K."/>
            <person name="Phillimore B.J."/>
            <person name="Plumb R."/>
            <person name="Rajan J."/>
            <person name="Raymond C."/>
            <person name="Rouse G."/>
            <person name="Saenphimmachak C."/>
            <person name="Sehra H.K."/>
            <person name="Sheridan E."/>
            <person name="Shownkeen R."/>
            <person name="Sims S."/>
            <person name="Skuce C.D."/>
            <person name="Smith M."/>
            <person name="Steward C."/>
            <person name="Subramanian S."/>
            <person name="Sycamore N."/>
            <person name="Tracey A."/>
            <person name="Tromans A."/>
            <person name="Van Helmond Z."/>
            <person name="Wall M."/>
            <person name="Wallis J.M."/>
            <person name="White S."/>
            <person name="Whitehead S.L."/>
            <person name="Wilkinson J.E."/>
            <person name="Willey D.L."/>
            <person name="Williams H."/>
            <person name="Wilming L."/>
            <person name="Wray P.W."/>
            <person name="Wu Z."/>
            <person name="Coulson A."/>
            <person name="Vaudin M."/>
            <person name="Sulston J.E."/>
            <person name="Durbin R.M."/>
            <person name="Hubbard T."/>
            <person name="Wooster R."/>
            <person name="Dunham I."/>
            <person name="Carter N.P."/>
            <person name="McVean G."/>
            <person name="Ross M.T."/>
            <person name="Harrow J."/>
            <person name="Olson M.V."/>
            <person name="Beck S."/>
            <person name="Rogers J."/>
            <person name="Bentley D.R."/>
        </authorList>
    </citation>
    <scope>NUCLEOTIDE SEQUENCE [LARGE SCALE GENOMIC DNA]</scope>
</reference>
<protein>
    <recommendedName>
        <fullName evidence="2">Kruppel-like factor 18</fullName>
    </recommendedName>
</protein>